<evidence type="ECO:0000255" key="1">
    <source>
        <dbReference type="HAMAP-Rule" id="MF_01368"/>
    </source>
</evidence>
<evidence type="ECO:0000256" key="2">
    <source>
        <dbReference type="SAM" id="MobiDB-lite"/>
    </source>
</evidence>
<evidence type="ECO:0000305" key="3"/>
<evidence type="ECO:0007829" key="4">
    <source>
        <dbReference type="PDB" id="7F0D"/>
    </source>
</evidence>
<accession>A5U8D2</accession>
<keyword id="KW-0002">3D-structure</keyword>
<keyword id="KW-1185">Reference proteome</keyword>
<keyword id="KW-0687">Ribonucleoprotein</keyword>
<keyword id="KW-0689">Ribosomal protein</keyword>
<name>RL17_MYCTA</name>
<feature type="chain" id="PRO_1000055886" description="Large ribosomal subunit protein bL17">
    <location>
        <begin position="1"/>
        <end position="180"/>
    </location>
</feature>
<feature type="region of interest" description="Disordered" evidence="2">
    <location>
        <begin position="134"/>
        <end position="180"/>
    </location>
</feature>
<feature type="strand" evidence="4">
    <location>
        <begin position="6"/>
        <end position="8"/>
    </location>
</feature>
<feature type="strand" evidence="4">
    <location>
        <begin position="10"/>
        <end position="13"/>
    </location>
</feature>
<feature type="helix" evidence="4">
    <location>
        <begin position="14"/>
        <end position="31"/>
    </location>
</feature>
<feature type="strand" evidence="4">
    <location>
        <begin position="32"/>
        <end position="37"/>
    </location>
</feature>
<feature type="helix" evidence="4">
    <location>
        <begin position="38"/>
        <end position="57"/>
    </location>
</feature>
<feature type="helix" evidence="4">
    <location>
        <begin position="60"/>
        <end position="66"/>
    </location>
</feature>
<feature type="turn" evidence="4">
    <location>
        <begin position="67"/>
        <end position="69"/>
    </location>
</feature>
<feature type="helix" evidence="4">
    <location>
        <begin position="73"/>
        <end position="79"/>
    </location>
</feature>
<feature type="turn" evidence="4">
    <location>
        <begin position="80"/>
        <end position="82"/>
    </location>
</feature>
<feature type="helix" evidence="4">
    <location>
        <begin position="83"/>
        <end position="86"/>
    </location>
</feature>
<feature type="strand" evidence="4">
    <location>
        <begin position="95"/>
        <end position="99"/>
    </location>
</feature>
<feature type="turn" evidence="4">
    <location>
        <begin position="104"/>
        <end position="106"/>
    </location>
</feature>
<feature type="strand" evidence="4">
    <location>
        <begin position="110"/>
        <end position="115"/>
    </location>
</feature>
<sequence>MPKPTKGPRLGGSSSHQKAILANLATSLFEHGRITTTEPKARALRPYAEKLITHAKKGALHNRREVLKKLRDKDVVHTLFAEIGPFFADRDGGYTRIIKIEARKGDNAPMAVIELVREKTVTSEANRARRVAAAQAKAKKAAAMPTEESEAKPAEEGDVVGASEPDAKAPEEPPAEAPEN</sequence>
<organism>
    <name type="scientific">Mycobacterium tuberculosis (strain ATCC 25177 / H37Ra)</name>
    <dbReference type="NCBI Taxonomy" id="419947"/>
    <lineage>
        <taxon>Bacteria</taxon>
        <taxon>Bacillati</taxon>
        <taxon>Actinomycetota</taxon>
        <taxon>Actinomycetes</taxon>
        <taxon>Mycobacteriales</taxon>
        <taxon>Mycobacteriaceae</taxon>
        <taxon>Mycobacterium</taxon>
        <taxon>Mycobacterium tuberculosis complex</taxon>
    </lineage>
</organism>
<gene>
    <name evidence="1" type="primary">rplQ</name>
    <name type="ordered locus">MRA_3497</name>
</gene>
<dbReference type="EMBL" id="CP000611">
    <property type="protein sequence ID" value="ABQ75282.1"/>
    <property type="molecule type" value="Genomic_DNA"/>
</dbReference>
<dbReference type="RefSeq" id="WP_003418346.1">
    <property type="nucleotide sequence ID" value="NZ_CP016972.1"/>
</dbReference>
<dbReference type="PDB" id="7F0D">
    <property type="method" value="EM"/>
    <property type="resolution" value="3.30 A"/>
    <property type="chains" value="N=1-180"/>
</dbReference>
<dbReference type="PDBsum" id="7F0D"/>
<dbReference type="SMR" id="A5U8D2"/>
<dbReference type="GeneID" id="45427445"/>
<dbReference type="KEGG" id="mra:MRA_3497"/>
<dbReference type="eggNOG" id="COG0203">
    <property type="taxonomic scope" value="Bacteria"/>
</dbReference>
<dbReference type="HOGENOM" id="CLU_074407_0_0_11"/>
<dbReference type="Proteomes" id="UP000001988">
    <property type="component" value="Chromosome"/>
</dbReference>
<dbReference type="GO" id="GO:0022625">
    <property type="term" value="C:cytosolic large ribosomal subunit"/>
    <property type="evidence" value="ECO:0007669"/>
    <property type="project" value="TreeGrafter"/>
</dbReference>
<dbReference type="GO" id="GO:0003735">
    <property type="term" value="F:structural constituent of ribosome"/>
    <property type="evidence" value="ECO:0007669"/>
    <property type="project" value="InterPro"/>
</dbReference>
<dbReference type="GO" id="GO:0006412">
    <property type="term" value="P:translation"/>
    <property type="evidence" value="ECO:0007669"/>
    <property type="project" value="UniProtKB-UniRule"/>
</dbReference>
<dbReference type="FunFam" id="3.90.1030.10:FF:000001">
    <property type="entry name" value="50S ribosomal protein L17"/>
    <property type="match status" value="1"/>
</dbReference>
<dbReference type="Gene3D" id="3.90.1030.10">
    <property type="entry name" value="Ribosomal protein L17"/>
    <property type="match status" value="1"/>
</dbReference>
<dbReference type="HAMAP" id="MF_01368">
    <property type="entry name" value="Ribosomal_bL17"/>
    <property type="match status" value="1"/>
</dbReference>
<dbReference type="InterPro" id="IPR000456">
    <property type="entry name" value="Ribosomal_bL17"/>
</dbReference>
<dbReference type="InterPro" id="IPR047859">
    <property type="entry name" value="Ribosomal_bL17_CS"/>
</dbReference>
<dbReference type="InterPro" id="IPR036373">
    <property type="entry name" value="Ribosomal_bL17_sf"/>
</dbReference>
<dbReference type="NCBIfam" id="TIGR00059">
    <property type="entry name" value="L17"/>
    <property type="match status" value="1"/>
</dbReference>
<dbReference type="PANTHER" id="PTHR14413:SF16">
    <property type="entry name" value="LARGE RIBOSOMAL SUBUNIT PROTEIN BL17M"/>
    <property type="match status" value="1"/>
</dbReference>
<dbReference type="PANTHER" id="PTHR14413">
    <property type="entry name" value="RIBOSOMAL PROTEIN L17"/>
    <property type="match status" value="1"/>
</dbReference>
<dbReference type="Pfam" id="PF01196">
    <property type="entry name" value="Ribosomal_L17"/>
    <property type="match status" value="1"/>
</dbReference>
<dbReference type="SUPFAM" id="SSF64263">
    <property type="entry name" value="Prokaryotic ribosomal protein L17"/>
    <property type="match status" value="1"/>
</dbReference>
<dbReference type="PROSITE" id="PS01167">
    <property type="entry name" value="RIBOSOMAL_L17"/>
    <property type="match status" value="1"/>
</dbReference>
<proteinExistence type="evidence at protein level"/>
<protein>
    <recommendedName>
        <fullName evidence="1">Large ribosomal subunit protein bL17</fullName>
    </recommendedName>
    <alternativeName>
        <fullName evidence="3">50S ribosomal protein L17</fullName>
    </alternativeName>
</protein>
<reference key="1">
    <citation type="journal article" date="2008" name="PLoS ONE">
        <title>Genetic basis of virulence attenuation revealed by comparative genomic analysis of Mycobacterium tuberculosis strain H37Ra versus H37Rv.</title>
        <authorList>
            <person name="Zheng H."/>
            <person name="Lu L."/>
            <person name="Wang B."/>
            <person name="Pu S."/>
            <person name="Zhang X."/>
            <person name="Zhu G."/>
            <person name="Shi W."/>
            <person name="Zhang L."/>
            <person name="Wang H."/>
            <person name="Wang S."/>
            <person name="Zhao G."/>
            <person name="Zhang Y."/>
        </authorList>
    </citation>
    <scope>NUCLEOTIDE SEQUENCE [LARGE SCALE GENOMIC DNA]</scope>
    <source>
        <strain>ATCC 25177 / H37Ra</strain>
    </source>
</reference>
<comment type="subunit">
    <text evidence="1">Part of the 50S ribosomal subunit. Contacts protein L32.</text>
</comment>
<comment type="similarity">
    <text evidence="1">Belongs to the bacterial ribosomal protein bL17 family.</text>
</comment>